<feature type="chain" id="PRO_0000314241" description="Mediator of RNA polymerase II transcription subunit 13-like">
    <location>
        <begin position="1"/>
        <end position="2102"/>
    </location>
</feature>
<feature type="region of interest" description="Disordered" evidence="2">
    <location>
        <begin position="304"/>
        <end position="335"/>
    </location>
</feature>
<feature type="region of interest" description="Disordered" evidence="2">
    <location>
        <begin position="432"/>
        <end position="487"/>
    </location>
</feature>
<feature type="region of interest" description="Disordered" evidence="2">
    <location>
        <begin position="514"/>
        <end position="587"/>
    </location>
</feature>
<feature type="region of interest" description="Disordered" evidence="2">
    <location>
        <begin position="689"/>
        <end position="758"/>
    </location>
</feature>
<feature type="region of interest" description="Disordered" evidence="2">
    <location>
        <begin position="776"/>
        <end position="819"/>
    </location>
</feature>
<feature type="region of interest" description="Disordered" evidence="2">
    <location>
        <begin position="947"/>
        <end position="1034"/>
    </location>
</feature>
<feature type="region of interest" description="Disordered" evidence="2">
    <location>
        <begin position="1451"/>
        <end position="1574"/>
    </location>
</feature>
<feature type="region of interest" description="Disordered" evidence="2">
    <location>
        <begin position="1948"/>
        <end position="1983"/>
    </location>
</feature>
<feature type="short sequence motif" description="LXXLL motif 1">
    <location>
        <begin position="1165"/>
        <end position="1169"/>
    </location>
</feature>
<feature type="short sequence motif" description="LXXLL motif 2">
    <location>
        <begin position="1254"/>
        <end position="1258"/>
    </location>
</feature>
<feature type="compositionally biased region" description="Pro residues" evidence="2">
    <location>
        <begin position="439"/>
        <end position="450"/>
    </location>
</feature>
<feature type="compositionally biased region" description="Basic and acidic residues" evidence="2">
    <location>
        <begin position="455"/>
        <end position="467"/>
    </location>
</feature>
<feature type="compositionally biased region" description="Acidic residues" evidence="2">
    <location>
        <begin position="693"/>
        <end position="714"/>
    </location>
</feature>
<feature type="compositionally biased region" description="Basic and acidic residues" evidence="2">
    <location>
        <begin position="715"/>
        <end position="737"/>
    </location>
</feature>
<feature type="compositionally biased region" description="Basic and acidic residues" evidence="2">
    <location>
        <begin position="794"/>
        <end position="804"/>
    </location>
</feature>
<feature type="compositionally biased region" description="Polar residues" evidence="2">
    <location>
        <begin position="947"/>
        <end position="974"/>
    </location>
</feature>
<feature type="compositionally biased region" description="Low complexity" evidence="2">
    <location>
        <begin position="979"/>
        <end position="990"/>
    </location>
</feature>
<feature type="compositionally biased region" description="Polar residues" evidence="2">
    <location>
        <begin position="1015"/>
        <end position="1029"/>
    </location>
</feature>
<feature type="compositionally biased region" description="Low complexity" evidence="2">
    <location>
        <begin position="1458"/>
        <end position="1467"/>
    </location>
</feature>
<feature type="compositionally biased region" description="Low complexity" evidence="2">
    <location>
        <begin position="1476"/>
        <end position="1502"/>
    </location>
</feature>
<feature type="compositionally biased region" description="Low complexity" evidence="2">
    <location>
        <begin position="1522"/>
        <end position="1538"/>
    </location>
</feature>
<feature type="compositionally biased region" description="Polar residues" evidence="2">
    <location>
        <begin position="1542"/>
        <end position="1552"/>
    </location>
</feature>
<feature type="compositionally biased region" description="Basic and acidic residues" evidence="2">
    <location>
        <begin position="1973"/>
        <end position="1983"/>
    </location>
</feature>
<sequence length="2102" mass="230992">MSSCFVPNGASLEDCHSNLFCLADLTGIKWKCFVWQGPTSSPILFPVTEEDPILCSFSRCLKADVLSVWRRHQTPGRRELWIFWWGDDPNFAELVHHDLSCNEDGSWESGLTYECRTLLFKAIHNLLERCLMNRSFVRIGKWFVKPYEKDEKPINKSEHLSCSFTFFVHGDSNVCTSVEINQHQPVYLLSEEHLTLAQQSSSSVQVILSPYGLSGTLTGQSFKLSDPPTQKLIEEWKQFYPIGPNTKEVTDDKMDDLDWEDDSLAAVEVVVAGVRMVYPASLVLVAQSDIPLVATVSSSSSSGSYAGAPHNQLVHGDTGISSVTLTPPTSPEEAQAVSQPAQKWVKLSAMSGVFSVDSSSHHGGKIPRRLASQMVERVWQECNINRAQNKRKFSTMSNGVCEEETDKASVWDFVESSQRSQCSCSRLKNQKQRACSTPGHPPSAGQPPQPSTKHKMAEKLEKGDKQQKRPLTPFHHRSSLCEEQPSLEQGESVHRLCLQGHEDSRYPSLHHADVTSSKTPMLHSSADEMAGSPQPPPLSPHPCERMEEPADGMKSSSSPLHQHFYPPSSEPCLEPQKPPDESTLDPLPLPCPPPYPETLEATIYVGSAINPNEDTTHNPWKYFRVPGGRNSDFHTPHLPVVAHFEDGNRTGGQDGIVSITEMMSSSKRPLKVSEELVKMYEHKKNQYLSSAVCDEDPEQESDPYAFEEGDEEFNFSDKDKKSGPEREAGKKAKREDGSSSSDDAQGSGGSKPLPTTSLIHETDLVVSINDLDNLFNSDEDDLTQPGSRRAAGGAEEKFGGKEPKPAAPDPLPCCADLHQMFPTPPSLDQGYSPINMGNTESAAGLSLLDGAMSGNFKMEVEEGFCSPKPSEIKDFSYVFKPESCQALIGCSLYAPLKTLPSQCLLPVKLPEECVYRPSWTVGKLGMLQPMAAMTFLNKDSNIPSVGSVVEQEQSCTPQTHNTFMSNSAPPSNSGAGILPSPATPRISAPTPRTPRTPRTPRGPASVQGSLKYENSDLNSPASTPSTCRPLSSVEPATVPSIPEAHSLYVTLILSESVMNLFKDCNFDSCCICVCNMNITGADVGIYISDPNMDSQYSSMDPCSCGFSAVMNRRYGNGAGLFLEDELDIMGRGSDAAREIEKHFEAVRAASLKRGTVLEEQVPDDLMLLLQDLCTNPFSPIIRPDLLGTVIKSPIRLEERDYYSDCYMALEHGRQFMDNMSGGKVDETLVKSSSLHHWAKRNAFDMSMLFSQDVLRMLLSLQPVLQDTIQKKRSVRSWGVQGPLTWQQFHKMAGRGSYGTDESPEPLPIPTLLVGYEYDYVVLSPFALPYWEKLLLDPYSSQRDVGYMVVCPDNEALLNGAKTFFRDLTAVYESCRLGQHRPIAKSHADGIVTVSDAGSKALTDQTLIDWLPKTINSSSSSEALNKLKLYAHVCRHDLASCLASQSLDGSLLTQRNPASSSQTSSSSSPVTTAQNVTPTTNSNSNTNTNTTPTSTSTSSSSSSCPQGVGNMPSSKPNTIPPFGAQGLQSSQQSGGQSAGTLGDATSATSQPQVPSEPAESTMEREKVGVPTDGDSHAVTYPPAIVIYIVNPFSYEENCQGSSSSVWTIALLRCYLEMLQLLPPHIRNAVYVQIIPSQYLLQPVWSEERHIYAQHLKSLAFSVYTQCRRRLPTSTNVKTLTGFGPGLAIDTALQSKERPQCLHLYAPPFVLAPVKDKQTELGETFGEAAQKYNVLFVAYCLSHDQRWLLASCTDQYGELLETCVISIDVPNRARRKKGSARRQGLQKLWEWCLDLVQMTSLPWRIVIGRLGRIGHGELRDWSILLSRRNLQSLGRRLKEMCRMCGISAADSPSILSTCLVAMEPQASFVIMPDSVSTGSVFGRSTTLNMQTSQLNTPQDTSCTHILVFPTSAGLQAFSDVTDGMGGMDGILDLFAENDLVDPDLINIIPNSPTTSPVHSPGSHYHHGGDGSKGQGTDRMESHDESPNILQQPMALGYFVSTAKAGPLPDWFWSSCPQAKNQCPLFLKASLHLNVSSVQSDELLHSKHSHPLDSSHTSDVLRFVLEQYNALSWLTCDPATQDRRSCLPVHFVVLNQMYNFIMNML</sequence>
<name>MD13L_DANRE</name>
<protein>
    <recommendedName>
        <fullName>Mediator of RNA polymerase II transcription subunit 13-like</fullName>
    </recommendedName>
    <alternativeName>
        <fullName>Thyroid hormone receptor-associated protein complex 240 kDa component-like protein</fullName>
    </alternativeName>
</protein>
<gene>
    <name type="ORF">zgc:153454</name>
</gene>
<keyword id="KW-0010">Activator</keyword>
<keyword id="KW-0539">Nucleus</keyword>
<keyword id="KW-1185">Reference proteome</keyword>
<keyword id="KW-0678">Repressor</keyword>
<keyword id="KW-0804">Transcription</keyword>
<keyword id="KW-0805">Transcription regulation</keyword>
<accession>A2VCZ5</accession>
<organism>
    <name type="scientific">Danio rerio</name>
    <name type="common">Zebrafish</name>
    <name type="synonym">Brachydanio rerio</name>
    <dbReference type="NCBI Taxonomy" id="7955"/>
    <lineage>
        <taxon>Eukaryota</taxon>
        <taxon>Metazoa</taxon>
        <taxon>Chordata</taxon>
        <taxon>Craniata</taxon>
        <taxon>Vertebrata</taxon>
        <taxon>Euteleostomi</taxon>
        <taxon>Actinopterygii</taxon>
        <taxon>Neopterygii</taxon>
        <taxon>Teleostei</taxon>
        <taxon>Ostariophysi</taxon>
        <taxon>Cypriniformes</taxon>
        <taxon>Danionidae</taxon>
        <taxon>Danioninae</taxon>
        <taxon>Danio</taxon>
    </lineage>
</organism>
<dbReference type="EMBL" id="BC129032">
    <property type="protein sequence ID" value="AAI29033.1"/>
    <property type="molecule type" value="mRNA"/>
</dbReference>
<dbReference type="RefSeq" id="NP_001077307.1">
    <property type="nucleotide sequence ID" value="NM_001083838.1"/>
</dbReference>
<dbReference type="FunCoup" id="A2VCZ5">
    <property type="interactions" value="670"/>
</dbReference>
<dbReference type="STRING" id="7955.ENSDARP00000126727"/>
<dbReference type="PaxDb" id="7955-ENSDARP00000126727"/>
<dbReference type="PeptideAtlas" id="A2VCZ5"/>
<dbReference type="GeneID" id="564707"/>
<dbReference type="KEGG" id="dre:564707"/>
<dbReference type="AGR" id="ZFIN:ZDB-GENE-030131-3529"/>
<dbReference type="CTD" id="564707"/>
<dbReference type="ZFIN" id="ZDB-GENE-030131-3529">
    <property type="gene designation" value="med13b"/>
</dbReference>
<dbReference type="eggNOG" id="KOG3600">
    <property type="taxonomic scope" value="Eukaryota"/>
</dbReference>
<dbReference type="InParanoid" id="A2VCZ5"/>
<dbReference type="OrthoDB" id="103819at2759"/>
<dbReference type="PhylomeDB" id="A2VCZ5"/>
<dbReference type="PRO" id="PR:A2VCZ5"/>
<dbReference type="Proteomes" id="UP000000437">
    <property type="component" value="Chromosome 15"/>
</dbReference>
<dbReference type="GO" id="GO:0016592">
    <property type="term" value="C:mediator complex"/>
    <property type="evidence" value="ECO:0000318"/>
    <property type="project" value="GO_Central"/>
</dbReference>
<dbReference type="GO" id="GO:0003713">
    <property type="term" value="F:transcription coactivator activity"/>
    <property type="evidence" value="ECO:0000318"/>
    <property type="project" value="GO_Central"/>
</dbReference>
<dbReference type="GO" id="GO:0001755">
    <property type="term" value="P:neural crest cell migration"/>
    <property type="evidence" value="ECO:0000315"/>
    <property type="project" value="ZFIN"/>
</dbReference>
<dbReference type="GO" id="GO:0045944">
    <property type="term" value="P:positive regulation of transcription by RNA polymerase II"/>
    <property type="evidence" value="ECO:0000318"/>
    <property type="project" value="GO_Central"/>
</dbReference>
<dbReference type="InterPro" id="IPR009401">
    <property type="entry name" value="Med13_C"/>
</dbReference>
<dbReference type="InterPro" id="IPR051139">
    <property type="entry name" value="Mediator_complx_sub13"/>
</dbReference>
<dbReference type="InterPro" id="IPR041285">
    <property type="entry name" value="MID_MedPIWI"/>
</dbReference>
<dbReference type="PANTHER" id="PTHR48249">
    <property type="entry name" value="MEDIATOR OF RNA POLYMERASE II TRANSCRIPTION SUBUNIT 13"/>
    <property type="match status" value="1"/>
</dbReference>
<dbReference type="PANTHER" id="PTHR48249:SF4">
    <property type="entry name" value="MEDIATOR OF RNA POLYMERASE II TRANSCRIPTION SUBUNIT 13"/>
    <property type="match status" value="1"/>
</dbReference>
<dbReference type="Pfam" id="PF06333">
    <property type="entry name" value="Med13_C"/>
    <property type="match status" value="1"/>
</dbReference>
<dbReference type="Pfam" id="PF18296">
    <property type="entry name" value="MID_MedPIWI"/>
    <property type="match status" value="1"/>
</dbReference>
<reference key="1">
    <citation type="submission" date="2006-12" db="EMBL/GenBank/DDBJ databases">
        <authorList>
            <consortium name="NIH - Zebrafish Gene Collection (ZGC) project"/>
        </authorList>
    </citation>
    <scope>NUCLEOTIDE SEQUENCE [LARGE SCALE MRNA]</scope>
    <source>
        <strain>AB</strain>
    </source>
</reference>
<proteinExistence type="evidence at transcript level"/>
<comment type="function">
    <text evidence="1">Component of the Mediator complex, a coactivator involved in regulated gene transcription of nearly all RNA polymerase II-dependent genes. Mediator functions as a bridge to convey information from gene-specific regulatory proteins to the basal RNA polymerase II transcription machinery. Mediator is recruited to promoters by direct interactions with regulatory proteins and serves as a scaffold for the assembly of a functional preinitiation complex with RNA polymerase II and the general transcription factors (By similarity).</text>
</comment>
<comment type="subunit">
    <text evidence="1">Component of the Mediator complex.</text>
</comment>
<comment type="subcellular location">
    <subcellularLocation>
        <location evidence="1">Nucleus</location>
    </subcellularLocation>
</comment>
<comment type="similarity">
    <text evidence="3">Belongs to the Mediator complex subunit 13 family.</text>
</comment>
<comment type="caution">
    <text evidence="3">This sequence is encoded by a gene on chromosome 15 and is unlikely to be the med13 ortholog because it shows similarity but not synteny with human MED13. The chromosome 10 med13 gene identified by PubMed:17208216 is distinct from this entry.</text>
</comment>
<evidence type="ECO:0000250" key="1"/>
<evidence type="ECO:0000256" key="2">
    <source>
        <dbReference type="SAM" id="MobiDB-lite"/>
    </source>
</evidence>
<evidence type="ECO:0000305" key="3"/>